<comment type="function">
    <text evidence="1">Catalytic subunit of tRNA (adenine-N(1)-)-methyltransferase, which catalyzes the formation of N(1)-methyladenine at position 58 (m1A58) in initiator methionyl-tRNA.</text>
</comment>
<comment type="catalytic activity">
    <reaction evidence="3">
        <text>adenosine(58) in tRNA + S-adenosyl-L-methionine = N(1)-methyladenosine(58) in tRNA + S-adenosyl-L-homocysteine + H(+)</text>
        <dbReference type="Rhea" id="RHEA:43152"/>
        <dbReference type="Rhea" id="RHEA-COMP:10365"/>
        <dbReference type="Rhea" id="RHEA-COMP:10366"/>
        <dbReference type="ChEBI" id="CHEBI:15378"/>
        <dbReference type="ChEBI" id="CHEBI:57856"/>
        <dbReference type="ChEBI" id="CHEBI:59789"/>
        <dbReference type="ChEBI" id="CHEBI:74411"/>
        <dbReference type="ChEBI" id="CHEBI:74491"/>
        <dbReference type="EC" id="2.1.1.220"/>
    </reaction>
</comment>
<comment type="subunit">
    <text evidence="1">Heterotetramer; composed of two copies of TRM6 and two copies of TRM61.</text>
</comment>
<comment type="subcellular location">
    <subcellularLocation>
        <location evidence="1">Nucleus</location>
    </subcellularLocation>
</comment>
<comment type="similarity">
    <text evidence="3">Belongs to the class I-like SAM-binding methyltransferase superfamily. TRM61 family.</text>
</comment>
<gene>
    <name type="primary">TRM61</name>
    <name type="ordered locus">KLLA0E15290g</name>
</gene>
<sequence length="407" mass="46707">MSQFFEYKDTIKEGDLVLAWLSRDNLKPITVKAGEVFNTRYGAFSHSDMIGKPFGSQIAIRTKGSNRFGFIHVLQPTPELWSISLPHRTQIVYTPDSSYIMQRMECNPRSRVIEAGTGSGSFSHAFARSAGHLFSYEFHEVRYEQAKQEFKEHGLLEAGNTTITHRDVCKDGFEIKNGDTTSHEFRGPEETKVELNADCIFLDLPAPWDAIPNLTSVISKEKKVNLCCFSPCIEQVDKTLEALEEEGWQDVQTVEIQGRQYEARRQMVRRLDDAIERLRDVKRRKHEGVEKRQKNVEQTSNNGSSVEATESDKDLKHTEKTHFNPFGKGSRVKEGDSNFEWTQVSKVELEIKSHTSFLTFASKIIDRTRDEEQTKAYLATFKDEGSKLSKREQRRLKAQANKDIQKE</sequence>
<reference key="1">
    <citation type="journal article" date="2004" name="Nature">
        <title>Genome evolution in yeasts.</title>
        <authorList>
            <person name="Dujon B."/>
            <person name="Sherman D."/>
            <person name="Fischer G."/>
            <person name="Durrens P."/>
            <person name="Casaregola S."/>
            <person name="Lafontaine I."/>
            <person name="de Montigny J."/>
            <person name="Marck C."/>
            <person name="Neuveglise C."/>
            <person name="Talla E."/>
            <person name="Goffard N."/>
            <person name="Frangeul L."/>
            <person name="Aigle M."/>
            <person name="Anthouard V."/>
            <person name="Babour A."/>
            <person name="Barbe V."/>
            <person name="Barnay S."/>
            <person name="Blanchin S."/>
            <person name="Beckerich J.-M."/>
            <person name="Beyne E."/>
            <person name="Bleykasten C."/>
            <person name="Boisrame A."/>
            <person name="Boyer J."/>
            <person name="Cattolico L."/>
            <person name="Confanioleri F."/>
            <person name="de Daruvar A."/>
            <person name="Despons L."/>
            <person name="Fabre E."/>
            <person name="Fairhead C."/>
            <person name="Ferry-Dumazet H."/>
            <person name="Groppi A."/>
            <person name="Hantraye F."/>
            <person name="Hennequin C."/>
            <person name="Jauniaux N."/>
            <person name="Joyet P."/>
            <person name="Kachouri R."/>
            <person name="Kerrest A."/>
            <person name="Koszul R."/>
            <person name="Lemaire M."/>
            <person name="Lesur I."/>
            <person name="Ma L."/>
            <person name="Muller H."/>
            <person name="Nicaud J.-M."/>
            <person name="Nikolski M."/>
            <person name="Oztas S."/>
            <person name="Ozier-Kalogeropoulos O."/>
            <person name="Pellenz S."/>
            <person name="Potier S."/>
            <person name="Richard G.-F."/>
            <person name="Straub M.-L."/>
            <person name="Suleau A."/>
            <person name="Swennen D."/>
            <person name="Tekaia F."/>
            <person name="Wesolowski-Louvel M."/>
            <person name="Westhof E."/>
            <person name="Wirth B."/>
            <person name="Zeniou-Meyer M."/>
            <person name="Zivanovic Y."/>
            <person name="Bolotin-Fukuhara M."/>
            <person name="Thierry A."/>
            <person name="Bouchier C."/>
            <person name="Caudron B."/>
            <person name="Scarpelli C."/>
            <person name="Gaillardin C."/>
            <person name="Weissenbach J."/>
            <person name="Wincker P."/>
            <person name="Souciet J.-L."/>
        </authorList>
    </citation>
    <scope>NUCLEOTIDE SEQUENCE [LARGE SCALE GENOMIC DNA]</scope>
    <source>
        <strain>ATCC 8585 / CBS 2359 / DSM 70799 / NBRC 1267 / NRRL Y-1140 / WM37</strain>
    </source>
</reference>
<accession>Q6CN53</accession>
<organism>
    <name type="scientific">Kluyveromyces lactis (strain ATCC 8585 / CBS 2359 / DSM 70799 / NBRC 1267 / NRRL Y-1140 / WM37)</name>
    <name type="common">Yeast</name>
    <name type="synonym">Candida sphaerica</name>
    <dbReference type="NCBI Taxonomy" id="284590"/>
    <lineage>
        <taxon>Eukaryota</taxon>
        <taxon>Fungi</taxon>
        <taxon>Dikarya</taxon>
        <taxon>Ascomycota</taxon>
        <taxon>Saccharomycotina</taxon>
        <taxon>Saccharomycetes</taxon>
        <taxon>Saccharomycetales</taxon>
        <taxon>Saccharomycetaceae</taxon>
        <taxon>Kluyveromyces</taxon>
    </lineage>
</organism>
<feature type="chain" id="PRO_0000256174" description="tRNA (adenine(58)-N(1))-methyltransferase catalytic subunit TRM61">
    <location>
        <begin position="1"/>
        <end position="407"/>
    </location>
</feature>
<feature type="region of interest" description="Disordered" evidence="4">
    <location>
        <begin position="284"/>
        <end position="335"/>
    </location>
</feature>
<feature type="region of interest" description="Disordered" evidence="4">
    <location>
        <begin position="388"/>
        <end position="407"/>
    </location>
</feature>
<feature type="compositionally biased region" description="Polar residues" evidence="4">
    <location>
        <begin position="296"/>
        <end position="308"/>
    </location>
</feature>
<feature type="compositionally biased region" description="Basic and acidic residues" evidence="4">
    <location>
        <begin position="310"/>
        <end position="322"/>
    </location>
</feature>
<feature type="binding site" evidence="2">
    <location>
        <begin position="119"/>
        <end position="121"/>
    </location>
    <ligand>
        <name>S-adenosyl-L-methionine</name>
        <dbReference type="ChEBI" id="CHEBI:59789"/>
    </ligand>
</feature>
<feature type="binding site" evidence="2 3">
    <location>
        <position position="137"/>
    </location>
    <ligand>
        <name>S-adenosyl-L-methionine</name>
        <dbReference type="ChEBI" id="CHEBI:59789"/>
    </ligand>
</feature>
<feature type="binding site" evidence="2">
    <location>
        <position position="142"/>
    </location>
    <ligand>
        <name>S-adenosyl-L-methionine</name>
        <dbReference type="ChEBI" id="CHEBI:59789"/>
    </ligand>
</feature>
<feature type="binding site" evidence="2">
    <location>
        <begin position="167"/>
        <end position="168"/>
    </location>
    <ligand>
        <name>S-adenosyl-L-methionine</name>
        <dbReference type="ChEBI" id="CHEBI:59789"/>
    </ligand>
</feature>
<feature type="binding site" evidence="2 3">
    <location>
        <position position="203"/>
    </location>
    <ligand>
        <name>S-adenosyl-L-methionine</name>
        <dbReference type="ChEBI" id="CHEBI:59789"/>
    </ligand>
</feature>
<protein>
    <recommendedName>
        <fullName>tRNA (adenine(58)-N(1))-methyltransferase catalytic subunit TRM61</fullName>
        <ecNumber>2.1.1.220</ecNumber>
    </recommendedName>
    <alternativeName>
        <fullName>tRNA(m1A58)-methyltransferase subunit TRM61</fullName>
        <shortName>tRNA(m1A58)MTase subunit TRM61</shortName>
    </alternativeName>
</protein>
<proteinExistence type="inferred from homology"/>
<dbReference type="EC" id="2.1.1.220"/>
<dbReference type="EMBL" id="CR382125">
    <property type="protein sequence ID" value="CAG99723.1"/>
    <property type="molecule type" value="Genomic_DNA"/>
</dbReference>
<dbReference type="RefSeq" id="XP_454636.1">
    <property type="nucleotide sequence ID" value="XM_454636.1"/>
</dbReference>
<dbReference type="SMR" id="Q6CN53"/>
<dbReference type="FunCoup" id="Q6CN53">
    <property type="interactions" value="647"/>
</dbReference>
<dbReference type="STRING" id="284590.Q6CN53"/>
<dbReference type="PaxDb" id="284590-Q6CN53"/>
<dbReference type="KEGG" id="kla:KLLA0_E15225g"/>
<dbReference type="eggNOG" id="KOG2915">
    <property type="taxonomic scope" value="Eukaryota"/>
</dbReference>
<dbReference type="HOGENOM" id="CLU_025402_4_0_1"/>
<dbReference type="InParanoid" id="Q6CN53"/>
<dbReference type="OMA" id="RPDHRMI"/>
<dbReference type="Proteomes" id="UP000000598">
    <property type="component" value="Chromosome E"/>
</dbReference>
<dbReference type="GO" id="GO:0005634">
    <property type="term" value="C:nucleus"/>
    <property type="evidence" value="ECO:0007669"/>
    <property type="project" value="UniProtKB-SubCell"/>
</dbReference>
<dbReference type="GO" id="GO:0031515">
    <property type="term" value="C:tRNA (m1A) methyltransferase complex"/>
    <property type="evidence" value="ECO:0007669"/>
    <property type="project" value="InterPro"/>
</dbReference>
<dbReference type="GO" id="GO:0160107">
    <property type="term" value="F:tRNA (adenine(58)-N1)-methyltransferase activity"/>
    <property type="evidence" value="ECO:0007669"/>
    <property type="project" value="UniProtKB-EC"/>
</dbReference>
<dbReference type="GO" id="GO:0030488">
    <property type="term" value="P:tRNA methylation"/>
    <property type="evidence" value="ECO:0007669"/>
    <property type="project" value="InterPro"/>
</dbReference>
<dbReference type="FunFam" id="3.10.330.20:FF:000002">
    <property type="entry name" value="tRNA (adenine(58)-N(1))-methyltransferase catalytic subunit TRMT61A"/>
    <property type="match status" value="1"/>
</dbReference>
<dbReference type="Gene3D" id="3.10.330.20">
    <property type="match status" value="1"/>
</dbReference>
<dbReference type="Gene3D" id="3.40.50.150">
    <property type="entry name" value="Vaccinia Virus protein VP39"/>
    <property type="match status" value="1"/>
</dbReference>
<dbReference type="InterPro" id="IPR029063">
    <property type="entry name" value="SAM-dependent_MTases_sf"/>
</dbReference>
<dbReference type="InterPro" id="IPR049470">
    <property type="entry name" value="TRM61_C"/>
</dbReference>
<dbReference type="InterPro" id="IPR014816">
    <property type="entry name" value="tRNA_MeTrfase_Gcd14"/>
</dbReference>
<dbReference type="PANTHER" id="PTHR12133">
    <property type="entry name" value="TRNA (ADENINE(58)-N(1))-METHYLTRANSFERASE"/>
    <property type="match status" value="1"/>
</dbReference>
<dbReference type="PANTHER" id="PTHR12133:SF2">
    <property type="entry name" value="TRNA (ADENINE(58)-N(1))-METHYLTRANSFERASE CATALYTIC SUBUNIT TRMT61A"/>
    <property type="match status" value="1"/>
</dbReference>
<dbReference type="Pfam" id="PF08704">
    <property type="entry name" value="GCD14"/>
    <property type="match status" value="1"/>
</dbReference>
<dbReference type="PIRSF" id="PIRSF017269">
    <property type="entry name" value="GCD14"/>
    <property type="match status" value="1"/>
</dbReference>
<dbReference type="SUPFAM" id="SSF53335">
    <property type="entry name" value="S-adenosyl-L-methionine-dependent methyltransferases"/>
    <property type="match status" value="1"/>
</dbReference>
<dbReference type="PROSITE" id="PS51620">
    <property type="entry name" value="SAM_TRM61"/>
    <property type="match status" value="1"/>
</dbReference>
<evidence type="ECO:0000250" key="1">
    <source>
        <dbReference type="UniProtKB" id="P46959"/>
    </source>
</evidence>
<evidence type="ECO:0000250" key="2">
    <source>
        <dbReference type="UniProtKB" id="Q96FX7"/>
    </source>
</evidence>
<evidence type="ECO:0000255" key="3">
    <source>
        <dbReference type="PROSITE-ProRule" id="PRU00952"/>
    </source>
</evidence>
<evidence type="ECO:0000256" key="4">
    <source>
        <dbReference type="SAM" id="MobiDB-lite"/>
    </source>
</evidence>
<keyword id="KW-0489">Methyltransferase</keyword>
<keyword id="KW-0539">Nucleus</keyword>
<keyword id="KW-1185">Reference proteome</keyword>
<keyword id="KW-0949">S-adenosyl-L-methionine</keyword>
<keyword id="KW-0808">Transferase</keyword>
<keyword id="KW-0819">tRNA processing</keyword>
<name>TRM61_KLULA</name>